<proteinExistence type="inferred from homology"/>
<dbReference type="EMBL" id="AL766846">
    <property type="protein sequence ID" value="CAD46244.1"/>
    <property type="molecule type" value="Genomic_DNA"/>
</dbReference>
<dbReference type="RefSeq" id="WP_000076708.1">
    <property type="nucleotide sequence ID" value="NC_004368.1"/>
</dbReference>
<dbReference type="SMR" id="Q8E6G8"/>
<dbReference type="KEGG" id="san:gbs0600"/>
<dbReference type="eggNOG" id="COG3237">
    <property type="taxonomic scope" value="Bacteria"/>
</dbReference>
<dbReference type="HOGENOM" id="CLU_135567_0_0_9"/>
<dbReference type="Proteomes" id="UP000000823">
    <property type="component" value="Chromosome"/>
</dbReference>
<dbReference type="Gene3D" id="1.10.1470.10">
    <property type="entry name" value="YjbJ"/>
    <property type="match status" value="1"/>
</dbReference>
<dbReference type="InterPro" id="IPR008462">
    <property type="entry name" value="CsbD"/>
</dbReference>
<dbReference type="InterPro" id="IPR036629">
    <property type="entry name" value="YjbJ_sf"/>
</dbReference>
<dbReference type="Pfam" id="PF05532">
    <property type="entry name" value="CsbD"/>
    <property type="match status" value="1"/>
</dbReference>
<dbReference type="SUPFAM" id="SSF69047">
    <property type="entry name" value="Hypothetical protein YjbJ"/>
    <property type="match status" value="1"/>
</dbReference>
<sequence length="66" mass="7021">MSQEKLKSKLDQAKGGAKEGFGKITGDKELEAKGFIEKTIAKGKELADDAKDAVEGAVDAVKEKLK</sequence>
<evidence type="ECO:0000256" key="1">
    <source>
        <dbReference type="SAM" id="MobiDB-lite"/>
    </source>
</evidence>
<evidence type="ECO:0000305" key="2"/>
<name>Y600_STRA3</name>
<reference key="1">
    <citation type="journal article" date="2002" name="Mol. Microbiol.">
        <title>Genome sequence of Streptococcus agalactiae, a pathogen causing invasive neonatal disease.</title>
        <authorList>
            <person name="Glaser P."/>
            <person name="Rusniok C."/>
            <person name="Buchrieser C."/>
            <person name="Chevalier F."/>
            <person name="Frangeul L."/>
            <person name="Msadek T."/>
            <person name="Zouine M."/>
            <person name="Couve E."/>
            <person name="Lalioui L."/>
            <person name="Poyart C."/>
            <person name="Trieu-Cuot P."/>
            <person name="Kunst F."/>
        </authorList>
    </citation>
    <scope>NUCLEOTIDE SEQUENCE [LARGE SCALE GENOMIC DNA]</scope>
    <source>
        <strain>NEM316</strain>
    </source>
</reference>
<gene>
    <name type="ordered locus">gbs0600</name>
</gene>
<organism>
    <name type="scientific">Streptococcus agalactiae serotype III (strain NEM316)</name>
    <dbReference type="NCBI Taxonomy" id="211110"/>
    <lineage>
        <taxon>Bacteria</taxon>
        <taxon>Bacillati</taxon>
        <taxon>Bacillota</taxon>
        <taxon>Bacilli</taxon>
        <taxon>Lactobacillales</taxon>
        <taxon>Streptococcaceae</taxon>
        <taxon>Streptococcus</taxon>
    </lineage>
</organism>
<accession>Q8E6G8</accession>
<comment type="similarity">
    <text evidence="2">Belongs to the UPF0337 (CsbD) family.</text>
</comment>
<feature type="chain" id="PRO_0000210040" description="UPF0337 protein gbs0600">
    <location>
        <begin position="1"/>
        <end position="66"/>
    </location>
</feature>
<feature type="region of interest" description="Disordered" evidence="1">
    <location>
        <begin position="1"/>
        <end position="22"/>
    </location>
</feature>
<protein>
    <recommendedName>
        <fullName>UPF0337 protein gbs0600</fullName>
    </recommendedName>
</protein>